<name>PYRC_SYNY3</name>
<feature type="chain" id="PRO_0000147220" description="Dihydroorotase">
    <location>
        <begin position="1"/>
        <end position="342"/>
    </location>
</feature>
<feature type="active site" evidence="1">
    <location>
        <position position="246"/>
    </location>
</feature>
<feature type="binding site" evidence="1">
    <location>
        <position position="13"/>
    </location>
    <ligand>
        <name>Zn(2+)</name>
        <dbReference type="ChEBI" id="CHEBI:29105"/>
        <label>1</label>
    </ligand>
</feature>
<feature type="binding site" evidence="1">
    <location>
        <begin position="15"/>
        <end position="17"/>
    </location>
    <ligand>
        <name>substrate</name>
    </ligand>
</feature>
<feature type="binding site" evidence="1">
    <location>
        <position position="15"/>
    </location>
    <ligand>
        <name>Zn(2+)</name>
        <dbReference type="ChEBI" id="CHEBI:29105"/>
        <label>1</label>
    </ligand>
</feature>
<feature type="binding site" evidence="1">
    <location>
        <position position="41"/>
    </location>
    <ligand>
        <name>substrate</name>
    </ligand>
</feature>
<feature type="binding site" description="via carbamate group" evidence="1">
    <location>
        <position position="99"/>
    </location>
    <ligand>
        <name>Zn(2+)</name>
        <dbReference type="ChEBI" id="CHEBI:29105"/>
        <label>1</label>
    </ligand>
</feature>
<feature type="binding site" description="via carbamate group" evidence="1">
    <location>
        <position position="99"/>
    </location>
    <ligand>
        <name>Zn(2+)</name>
        <dbReference type="ChEBI" id="CHEBI:29105"/>
        <label>2</label>
    </ligand>
</feature>
<feature type="binding site" evidence="1">
    <location>
        <position position="136"/>
    </location>
    <ligand>
        <name>substrate</name>
    </ligand>
</feature>
<feature type="binding site" evidence="1">
    <location>
        <position position="136"/>
    </location>
    <ligand>
        <name>Zn(2+)</name>
        <dbReference type="ChEBI" id="CHEBI:29105"/>
        <label>2</label>
    </ligand>
</feature>
<feature type="binding site" evidence="1">
    <location>
        <position position="174"/>
    </location>
    <ligand>
        <name>Zn(2+)</name>
        <dbReference type="ChEBI" id="CHEBI:29105"/>
        <label>2</label>
    </ligand>
</feature>
<feature type="binding site" evidence="1">
    <location>
        <position position="218"/>
    </location>
    <ligand>
        <name>substrate</name>
    </ligand>
</feature>
<feature type="binding site" evidence="1">
    <location>
        <position position="246"/>
    </location>
    <ligand>
        <name>Zn(2+)</name>
        <dbReference type="ChEBI" id="CHEBI:29105"/>
        <label>1</label>
    </ligand>
</feature>
<feature type="binding site" evidence="1">
    <location>
        <position position="250"/>
    </location>
    <ligand>
        <name>substrate</name>
    </ligand>
</feature>
<feature type="binding site" evidence="1">
    <location>
        <position position="262"/>
    </location>
    <ligand>
        <name>substrate</name>
    </ligand>
</feature>
<feature type="modified residue" description="N6-carboxylysine" evidence="1">
    <location>
        <position position="99"/>
    </location>
</feature>
<gene>
    <name evidence="1" type="primary">pyrC</name>
    <name type="ordered locus">slr0406</name>
</gene>
<sequence length="342" mass="38127">MEKLTITRPDDWHLHLRDGAALKAVLPHTVRQFARAIVMPNLKPPVRSVADAAAYRERILAAIPAGGQFEPLMTLYLTDNTNPEEIIAAKASQFVKAVKYYPAGATTNSDFGVTDIHRCDAVLAAMEQVDLPLLLHGEVTDSNIDIFDREKVFIEKYLIPLREKFPRLRVVLEHITTSDAVQFVLSANNIAATITPQHLLFSRNALFKGGICPHFYCLPILKREEHRLSLLHAATSGNPKFFLGTDSAPHARNSKESLCGCAGCYSALHAMELYAEAFESVNSLDKLEAFASFYGPDFYQLPRNTAQITLMKNPWRIPAELPFPESGLVPLRAGEEITWQMV</sequence>
<keyword id="KW-0378">Hydrolase</keyword>
<keyword id="KW-0479">Metal-binding</keyword>
<keyword id="KW-0665">Pyrimidine biosynthesis</keyword>
<keyword id="KW-1185">Reference proteome</keyword>
<keyword id="KW-0862">Zinc</keyword>
<proteinExistence type="inferred from homology"/>
<organism>
    <name type="scientific">Synechocystis sp. (strain ATCC 27184 / PCC 6803 / Kazusa)</name>
    <dbReference type="NCBI Taxonomy" id="1111708"/>
    <lineage>
        <taxon>Bacteria</taxon>
        <taxon>Bacillati</taxon>
        <taxon>Cyanobacteriota</taxon>
        <taxon>Cyanophyceae</taxon>
        <taxon>Synechococcales</taxon>
        <taxon>Merismopediaceae</taxon>
        <taxon>Synechocystis</taxon>
    </lineage>
</organism>
<evidence type="ECO:0000255" key="1">
    <source>
        <dbReference type="HAMAP-Rule" id="MF_00219"/>
    </source>
</evidence>
<reference key="1">
    <citation type="journal article" date="1996" name="DNA Res.">
        <title>Sequence analysis of the genome of the unicellular cyanobacterium Synechocystis sp. strain PCC6803. II. Sequence determination of the entire genome and assignment of potential protein-coding regions.</title>
        <authorList>
            <person name="Kaneko T."/>
            <person name="Sato S."/>
            <person name="Kotani H."/>
            <person name="Tanaka A."/>
            <person name="Asamizu E."/>
            <person name="Nakamura Y."/>
            <person name="Miyajima N."/>
            <person name="Hirosawa M."/>
            <person name="Sugiura M."/>
            <person name="Sasamoto S."/>
            <person name="Kimura T."/>
            <person name="Hosouchi T."/>
            <person name="Matsuno A."/>
            <person name="Muraki A."/>
            <person name="Nakazaki N."/>
            <person name="Naruo K."/>
            <person name="Okumura S."/>
            <person name="Shimpo S."/>
            <person name="Takeuchi C."/>
            <person name="Wada T."/>
            <person name="Watanabe A."/>
            <person name="Yamada M."/>
            <person name="Yasuda M."/>
            <person name="Tabata S."/>
        </authorList>
    </citation>
    <scope>NUCLEOTIDE SEQUENCE [LARGE SCALE GENOMIC DNA]</scope>
    <source>
        <strain>ATCC 27184 / PCC 6803 / Kazusa</strain>
    </source>
</reference>
<protein>
    <recommendedName>
        <fullName evidence="1">Dihydroorotase</fullName>
        <shortName evidence="1">DHOase</shortName>
        <ecNumber evidence="1">3.5.2.3</ecNumber>
    </recommendedName>
</protein>
<accession>P74438</accession>
<comment type="function">
    <text evidence="1">Catalyzes the reversible cyclization of carbamoyl aspartate to dihydroorotate.</text>
</comment>
<comment type="catalytic activity">
    <reaction evidence="1">
        <text>(S)-dihydroorotate + H2O = N-carbamoyl-L-aspartate + H(+)</text>
        <dbReference type="Rhea" id="RHEA:24296"/>
        <dbReference type="ChEBI" id="CHEBI:15377"/>
        <dbReference type="ChEBI" id="CHEBI:15378"/>
        <dbReference type="ChEBI" id="CHEBI:30864"/>
        <dbReference type="ChEBI" id="CHEBI:32814"/>
        <dbReference type="EC" id="3.5.2.3"/>
    </reaction>
</comment>
<comment type="cofactor">
    <cofactor evidence="1">
        <name>Zn(2+)</name>
        <dbReference type="ChEBI" id="CHEBI:29105"/>
    </cofactor>
    <text evidence="1">Binds 2 Zn(2+) ions per subunit.</text>
</comment>
<comment type="pathway">
    <text evidence="1">Pyrimidine metabolism; UMP biosynthesis via de novo pathway; (S)-dihydroorotate from bicarbonate: step 3/3.</text>
</comment>
<comment type="subunit">
    <text evidence="1">Homodimer.</text>
</comment>
<comment type="similarity">
    <text evidence="1">Belongs to the metallo-dependent hydrolases superfamily. DHOase family. Class II DHOase subfamily.</text>
</comment>
<dbReference type="EC" id="3.5.2.3" evidence="1"/>
<dbReference type="EMBL" id="BA000022">
    <property type="protein sequence ID" value="BAA18539.1"/>
    <property type="molecule type" value="Genomic_DNA"/>
</dbReference>
<dbReference type="PIR" id="S76410">
    <property type="entry name" value="S76410"/>
</dbReference>
<dbReference type="SMR" id="P74438"/>
<dbReference type="IntAct" id="P74438">
    <property type="interactions" value="3"/>
</dbReference>
<dbReference type="STRING" id="1148.gene:10499421"/>
<dbReference type="MEROPS" id="M38.A02"/>
<dbReference type="PaxDb" id="1148-1653627"/>
<dbReference type="EnsemblBacteria" id="BAA18539">
    <property type="protein sequence ID" value="BAA18539"/>
    <property type="gene ID" value="BAA18539"/>
</dbReference>
<dbReference type="KEGG" id="syn:slr0406"/>
<dbReference type="eggNOG" id="COG0418">
    <property type="taxonomic scope" value="Bacteria"/>
</dbReference>
<dbReference type="InParanoid" id="P74438"/>
<dbReference type="PhylomeDB" id="P74438"/>
<dbReference type="UniPathway" id="UPA00070">
    <property type="reaction ID" value="UER00117"/>
</dbReference>
<dbReference type="Proteomes" id="UP000001425">
    <property type="component" value="Chromosome"/>
</dbReference>
<dbReference type="GO" id="GO:0005737">
    <property type="term" value="C:cytoplasm"/>
    <property type="evidence" value="ECO:0000318"/>
    <property type="project" value="GO_Central"/>
</dbReference>
<dbReference type="GO" id="GO:0005829">
    <property type="term" value="C:cytosol"/>
    <property type="evidence" value="ECO:0000318"/>
    <property type="project" value="GO_Central"/>
</dbReference>
<dbReference type="GO" id="GO:0004151">
    <property type="term" value="F:dihydroorotase activity"/>
    <property type="evidence" value="ECO:0000318"/>
    <property type="project" value="GO_Central"/>
</dbReference>
<dbReference type="GO" id="GO:0008270">
    <property type="term" value="F:zinc ion binding"/>
    <property type="evidence" value="ECO:0007669"/>
    <property type="project" value="UniProtKB-UniRule"/>
</dbReference>
<dbReference type="GO" id="GO:0006207">
    <property type="term" value="P:'de novo' pyrimidine nucleobase biosynthetic process"/>
    <property type="evidence" value="ECO:0000318"/>
    <property type="project" value="GO_Central"/>
</dbReference>
<dbReference type="GO" id="GO:0044205">
    <property type="term" value="P:'de novo' UMP biosynthetic process"/>
    <property type="evidence" value="ECO:0007669"/>
    <property type="project" value="UniProtKB-UniRule"/>
</dbReference>
<dbReference type="GO" id="GO:0006221">
    <property type="term" value="P:pyrimidine nucleotide biosynthetic process"/>
    <property type="evidence" value="ECO:0000318"/>
    <property type="project" value="GO_Central"/>
</dbReference>
<dbReference type="CDD" id="cd01294">
    <property type="entry name" value="DHOase"/>
    <property type="match status" value="1"/>
</dbReference>
<dbReference type="FunFam" id="3.20.20.140:FF:000006">
    <property type="entry name" value="Dihydroorotase"/>
    <property type="match status" value="1"/>
</dbReference>
<dbReference type="Gene3D" id="3.20.20.140">
    <property type="entry name" value="Metal-dependent hydrolases"/>
    <property type="match status" value="1"/>
</dbReference>
<dbReference type="HAMAP" id="MF_00219">
    <property type="entry name" value="PyrC_classII"/>
    <property type="match status" value="1"/>
</dbReference>
<dbReference type="InterPro" id="IPR006680">
    <property type="entry name" value="Amidohydro-rel"/>
</dbReference>
<dbReference type="InterPro" id="IPR004721">
    <property type="entry name" value="DHOdimr"/>
</dbReference>
<dbReference type="InterPro" id="IPR002195">
    <property type="entry name" value="Dihydroorotase_CS"/>
</dbReference>
<dbReference type="InterPro" id="IPR032466">
    <property type="entry name" value="Metal_Hydrolase"/>
</dbReference>
<dbReference type="NCBIfam" id="TIGR00856">
    <property type="entry name" value="pyrC_dimer"/>
    <property type="match status" value="1"/>
</dbReference>
<dbReference type="PANTHER" id="PTHR43137">
    <property type="entry name" value="DIHYDROOROTASE"/>
    <property type="match status" value="1"/>
</dbReference>
<dbReference type="PANTHER" id="PTHR43137:SF1">
    <property type="entry name" value="DIHYDROOROTASE"/>
    <property type="match status" value="1"/>
</dbReference>
<dbReference type="Pfam" id="PF01979">
    <property type="entry name" value="Amidohydro_1"/>
    <property type="match status" value="1"/>
</dbReference>
<dbReference type="PIRSF" id="PIRSF001237">
    <property type="entry name" value="DHOdimr"/>
    <property type="match status" value="1"/>
</dbReference>
<dbReference type="SUPFAM" id="SSF51556">
    <property type="entry name" value="Metallo-dependent hydrolases"/>
    <property type="match status" value="1"/>
</dbReference>
<dbReference type="PROSITE" id="PS00482">
    <property type="entry name" value="DIHYDROOROTASE_1"/>
    <property type="match status" value="1"/>
</dbReference>
<dbReference type="PROSITE" id="PS00483">
    <property type="entry name" value="DIHYDROOROTASE_2"/>
    <property type="match status" value="1"/>
</dbReference>